<accession>P72818</accession>
<evidence type="ECO:0000255" key="1">
    <source>
        <dbReference type="HAMAP-Rule" id="MF_01982"/>
    </source>
</evidence>
<gene>
    <name evidence="1" type="primary">menG</name>
    <name type="ordered locus">sll1653</name>
</gene>
<organism>
    <name type="scientific">Synechocystis sp. (strain ATCC 27184 / PCC 6803 / Kazusa)</name>
    <dbReference type="NCBI Taxonomy" id="1111708"/>
    <lineage>
        <taxon>Bacteria</taxon>
        <taxon>Bacillati</taxon>
        <taxon>Cyanobacteriota</taxon>
        <taxon>Cyanophyceae</taxon>
        <taxon>Synechococcales</taxon>
        <taxon>Merismopediaceae</taxon>
        <taxon>Synechocystis</taxon>
    </lineage>
</organism>
<comment type="function">
    <text evidence="1">Methyltransferase required for the conversion of 2-phytyl-1,4-beta-naphthoquinol to phylloquinol.</text>
</comment>
<comment type="catalytic activity">
    <reaction evidence="1">
        <text>demethylphylloquinol + S-adenosyl-L-methionine = phylloquinol + S-adenosyl-L-homocysteine + H(+)</text>
        <dbReference type="Rhea" id="RHEA:40551"/>
        <dbReference type="ChEBI" id="CHEBI:15378"/>
        <dbReference type="ChEBI" id="CHEBI:28433"/>
        <dbReference type="ChEBI" id="CHEBI:57856"/>
        <dbReference type="ChEBI" id="CHEBI:59789"/>
        <dbReference type="ChEBI" id="CHEBI:87844"/>
        <dbReference type="EC" id="2.1.1.329"/>
    </reaction>
</comment>
<comment type="pathway">
    <text evidence="1">Cofactor biosynthesis; phylloquinone biosynthesis.</text>
</comment>
<comment type="similarity">
    <text evidence="1">Belongs to the class I-like SAM-binding methyltransferase superfamily. MenG/UbiE family.</text>
</comment>
<sequence>MSNSLLTQPTQESVQQIFARIAPQYDDLNTFLSFGQHHIWKAMAVKWSGVSPGDRLLDVCCGSGDLAFQGAKVVGTRGKVVGLDFCAELLAIAAGKHKSKYAHLPMQWLQGDALALPFSDNEFDGATMGYGLRNVGNIPQALTELQRVLKPGKKVAILDFHQPGNALAANFQRWYLANVVVPMAKQWRLTEEYAYLQPSLDRFPTGPKQVQFALEVGFAKAVHYPIAAGLMGVLVAEK</sequence>
<proteinExistence type="inferred from homology"/>
<dbReference type="EC" id="2.1.1.329" evidence="1"/>
<dbReference type="EMBL" id="BA000022">
    <property type="protein sequence ID" value="BAA16833.1"/>
    <property type="molecule type" value="Genomic_DNA"/>
</dbReference>
<dbReference type="PIR" id="S74682">
    <property type="entry name" value="S74682"/>
</dbReference>
<dbReference type="SMR" id="P72818"/>
<dbReference type="FunCoup" id="P72818">
    <property type="interactions" value="484"/>
</dbReference>
<dbReference type="IntAct" id="P72818">
    <property type="interactions" value="9"/>
</dbReference>
<dbReference type="STRING" id="1148.gene:10497691"/>
<dbReference type="PaxDb" id="1148-1651907"/>
<dbReference type="EnsemblBacteria" id="BAA16833">
    <property type="protein sequence ID" value="BAA16833"/>
    <property type="gene ID" value="BAA16833"/>
</dbReference>
<dbReference type="KEGG" id="syn:sll1653"/>
<dbReference type="eggNOG" id="COG2226">
    <property type="taxonomic scope" value="Bacteria"/>
</dbReference>
<dbReference type="InParanoid" id="P72818"/>
<dbReference type="PhylomeDB" id="P72818"/>
<dbReference type="BioCyc" id="MetaCyc:MONOMER-13821"/>
<dbReference type="BRENDA" id="2.1.1.329">
    <property type="organism ID" value="382"/>
</dbReference>
<dbReference type="UniPathway" id="UPA00995"/>
<dbReference type="Proteomes" id="UP000001425">
    <property type="component" value="Chromosome"/>
</dbReference>
<dbReference type="GO" id="GO:0052624">
    <property type="term" value="F:2-phytyl-1,4-naphthoquinone methyltransferase activity"/>
    <property type="evidence" value="ECO:0007669"/>
    <property type="project" value="UniProtKB-EC"/>
</dbReference>
<dbReference type="GO" id="GO:0008168">
    <property type="term" value="F:methyltransferase activity"/>
    <property type="evidence" value="ECO:0000318"/>
    <property type="project" value="GO_Central"/>
</dbReference>
<dbReference type="GO" id="GO:0032259">
    <property type="term" value="P:methylation"/>
    <property type="evidence" value="ECO:0007669"/>
    <property type="project" value="UniProtKB-KW"/>
</dbReference>
<dbReference type="GO" id="GO:0042372">
    <property type="term" value="P:phylloquinone biosynthetic process"/>
    <property type="evidence" value="ECO:0007669"/>
    <property type="project" value="UniProtKB-UniRule"/>
</dbReference>
<dbReference type="CDD" id="cd02440">
    <property type="entry name" value="AdoMet_MTases"/>
    <property type="match status" value="1"/>
</dbReference>
<dbReference type="Gene3D" id="3.40.50.150">
    <property type="entry name" value="Vaccinia Virus protein VP39"/>
    <property type="match status" value="1"/>
</dbReference>
<dbReference type="HAMAP" id="MF_01982">
    <property type="entry name" value="MenG_phylloquinone_subfam"/>
    <property type="match status" value="1"/>
</dbReference>
<dbReference type="HAMAP" id="MF_01813">
    <property type="entry name" value="MenG_UbiE_methyltr"/>
    <property type="match status" value="1"/>
</dbReference>
<dbReference type="InterPro" id="IPR032904">
    <property type="entry name" value="MenG"/>
</dbReference>
<dbReference type="InterPro" id="IPR029063">
    <property type="entry name" value="SAM-dependent_MTases_sf"/>
</dbReference>
<dbReference type="InterPro" id="IPR004033">
    <property type="entry name" value="UbiE/COQ5_MeTrFase"/>
</dbReference>
<dbReference type="InterPro" id="IPR023576">
    <property type="entry name" value="UbiE/COQ5_MeTrFase_CS"/>
</dbReference>
<dbReference type="NCBIfam" id="TIGR01934">
    <property type="entry name" value="MenG_MenH_UbiE"/>
    <property type="match status" value="1"/>
</dbReference>
<dbReference type="NCBIfam" id="NF001244">
    <property type="entry name" value="PRK00216.1-5"/>
    <property type="match status" value="1"/>
</dbReference>
<dbReference type="PANTHER" id="PTHR43591:SF24">
    <property type="entry name" value="2-METHOXY-6-POLYPRENYL-1,4-BENZOQUINOL METHYLASE, MITOCHONDRIAL"/>
    <property type="match status" value="1"/>
</dbReference>
<dbReference type="PANTHER" id="PTHR43591">
    <property type="entry name" value="METHYLTRANSFERASE"/>
    <property type="match status" value="1"/>
</dbReference>
<dbReference type="Pfam" id="PF01209">
    <property type="entry name" value="Ubie_methyltran"/>
    <property type="match status" value="1"/>
</dbReference>
<dbReference type="SUPFAM" id="SSF53335">
    <property type="entry name" value="S-adenosyl-L-methionine-dependent methyltransferases"/>
    <property type="match status" value="1"/>
</dbReference>
<dbReference type="PROSITE" id="PS51608">
    <property type="entry name" value="SAM_MT_UBIE"/>
    <property type="match status" value="1"/>
</dbReference>
<dbReference type="PROSITE" id="PS01183">
    <property type="entry name" value="UBIE_1"/>
    <property type="match status" value="1"/>
</dbReference>
<keyword id="KW-0489">Methyltransferase</keyword>
<keyword id="KW-1185">Reference proteome</keyword>
<keyword id="KW-0949">S-adenosyl-L-methionine</keyword>
<keyword id="KW-0808">Transferase</keyword>
<protein>
    <recommendedName>
        <fullName evidence="1">2-phytyl-1,4-naphtoquinone methyltransferase</fullName>
        <ecNumber evidence="1">2.1.1.329</ecNumber>
    </recommendedName>
    <alternativeName>
        <fullName evidence="1">Demethylphylloquinone methyltransferase</fullName>
    </alternativeName>
</protein>
<reference key="1">
    <citation type="journal article" date="1996" name="DNA Res.">
        <title>Sequence analysis of the genome of the unicellular cyanobacterium Synechocystis sp. strain PCC6803. II. Sequence determination of the entire genome and assignment of potential protein-coding regions.</title>
        <authorList>
            <person name="Kaneko T."/>
            <person name="Sato S."/>
            <person name="Kotani H."/>
            <person name="Tanaka A."/>
            <person name="Asamizu E."/>
            <person name="Nakamura Y."/>
            <person name="Miyajima N."/>
            <person name="Hirosawa M."/>
            <person name="Sugiura M."/>
            <person name="Sasamoto S."/>
            <person name="Kimura T."/>
            <person name="Hosouchi T."/>
            <person name="Matsuno A."/>
            <person name="Muraki A."/>
            <person name="Nakazaki N."/>
            <person name="Naruo K."/>
            <person name="Okumura S."/>
            <person name="Shimpo S."/>
            <person name="Takeuchi C."/>
            <person name="Wada T."/>
            <person name="Watanabe A."/>
            <person name="Yamada M."/>
            <person name="Yasuda M."/>
            <person name="Tabata S."/>
        </authorList>
    </citation>
    <scope>NUCLEOTIDE SEQUENCE [LARGE SCALE GENOMIC DNA]</scope>
    <source>
        <strain>ATCC 27184 / PCC 6803 / Kazusa</strain>
    </source>
</reference>
<name>MENG_SYNY3</name>
<feature type="chain" id="PRO_0000193342" description="2-phytyl-1,4-naphtoquinone methyltransferase">
    <location>
        <begin position="1"/>
        <end position="238"/>
    </location>
</feature>